<protein>
    <recommendedName>
        <fullName evidence="1">UDP-N-acetylmuramate--L-alanine ligase</fullName>
        <ecNumber evidence="1">6.3.2.8</ecNumber>
    </recommendedName>
    <alternativeName>
        <fullName evidence="1">UDP-N-acetylmuramoyl-L-alanine synthetase</fullName>
    </alternativeName>
</protein>
<feature type="chain" id="PRO_1000004356" description="UDP-N-acetylmuramate--L-alanine ligase">
    <location>
        <begin position="1"/>
        <end position="439"/>
    </location>
</feature>
<feature type="binding site" evidence="1">
    <location>
        <begin position="113"/>
        <end position="119"/>
    </location>
    <ligand>
        <name>ATP</name>
        <dbReference type="ChEBI" id="CHEBI:30616"/>
    </ligand>
</feature>
<organism>
    <name type="scientific">Lactobacillus delbrueckii subsp. bulgaricus (strain ATCC 11842 / DSM 20081 / BCRC 10696 / JCM 1002 / NBRC 13953 / NCIMB 11778 / NCTC 12712 / WDCM 00102 / Lb 14)</name>
    <dbReference type="NCBI Taxonomy" id="390333"/>
    <lineage>
        <taxon>Bacteria</taxon>
        <taxon>Bacillati</taxon>
        <taxon>Bacillota</taxon>
        <taxon>Bacilli</taxon>
        <taxon>Lactobacillales</taxon>
        <taxon>Lactobacillaceae</taxon>
        <taxon>Lactobacillus</taxon>
    </lineage>
</organism>
<reference key="1">
    <citation type="journal article" date="2006" name="Proc. Natl. Acad. Sci. U.S.A.">
        <title>The complete genome sequence of Lactobacillus bulgaricus reveals extensive and ongoing reductive evolution.</title>
        <authorList>
            <person name="van de Guchte M."/>
            <person name="Penaud S."/>
            <person name="Grimaldi C."/>
            <person name="Barbe V."/>
            <person name="Bryson K."/>
            <person name="Nicolas P."/>
            <person name="Robert C."/>
            <person name="Oztas S."/>
            <person name="Mangenot S."/>
            <person name="Couloux A."/>
            <person name="Loux V."/>
            <person name="Dervyn R."/>
            <person name="Bossy R."/>
            <person name="Bolotin A."/>
            <person name="Batto J.-M."/>
            <person name="Walunas T."/>
            <person name="Gibrat J.-F."/>
            <person name="Bessieres P."/>
            <person name="Weissenbach J."/>
            <person name="Ehrlich S.D."/>
            <person name="Maguin E."/>
        </authorList>
    </citation>
    <scope>NUCLEOTIDE SEQUENCE [LARGE SCALE GENOMIC DNA]</scope>
    <source>
        <strain>ATCC 11842 / DSM 20081 / BCRC 10696 / JCM 1002 / NBRC 13953 / NCIMB 11778 / NCTC 12712 / WDCM 00102 / Lb 14</strain>
    </source>
</reference>
<gene>
    <name evidence="1" type="primary">murC</name>
    <name type="ordered locus">Ldb1522</name>
</gene>
<keyword id="KW-0067">ATP-binding</keyword>
<keyword id="KW-0131">Cell cycle</keyword>
<keyword id="KW-0132">Cell division</keyword>
<keyword id="KW-0133">Cell shape</keyword>
<keyword id="KW-0961">Cell wall biogenesis/degradation</keyword>
<keyword id="KW-0963">Cytoplasm</keyword>
<keyword id="KW-0436">Ligase</keyword>
<keyword id="KW-0547">Nucleotide-binding</keyword>
<keyword id="KW-0573">Peptidoglycan synthesis</keyword>
<keyword id="KW-1185">Reference proteome</keyword>
<evidence type="ECO:0000255" key="1">
    <source>
        <dbReference type="HAMAP-Rule" id="MF_00046"/>
    </source>
</evidence>
<comment type="function">
    <text evidence="1">Cell wall formation.</text>
</comment>
<comment type="catalytic activity">
    <reaction evidence="1">
        <text>UDP-N-acetyl-alpha-D-muramate + L-alanine + ATP = UDP-N-acetyl-alpha-D-muramoyl-L-alanine + ADP + phosphate + H(+)</text>
        <dbReference type="Rhea" id="RHEA:23372"/>
        <dbReference type="ChEBI" id="CHEBI:15378"/>
        <dbReference type="ChEBI" id="CHEBI:30616"/>
        <dbReference type="ChEBI" id="CHEBI:43474"/>
        <dbReference type="ChEBI" id="CHEBI:57972"/>
        <dbReference type="ChEBI" id="CHEBI:70757"/>
        <dbReference type="ChEBI" id="CHEBI:83898"/>
        <dbReference type="ChEBI" id="CHEBI:456216"/>
        <dbReference type="EC" id="6.3.2.8"/>
    </reaction>
</comment>
<comment type="pathway">
    <text evidence="1">Cell wall biogenesis; peptidoglycan biosynthesis.</text>
</comment>
<comment type="subcellular location">
    <subcellularLocation>
        <location evidence="1">Cytoplasm</location>
    </subcellularLocation>
</comment>
<comment type="similarity">
    <text evidence="1">Belongs to the MurCDEF family.</text>
</comment>
<accession>Q1G9A0</accession>
<proteinExistence type="inferred from homology"/>
<name>MURC_LACDA</name>
<dbReference type="EC" id="6.3.2.8" evidence="1"/>
<dbReference type="EMBL" id="CR954253">
    <property type="protein sequence ID" value="CAI98322.1"/>
    <property type="molecule type" value="Genomic_DNA"/>
</dbReference>
<dbReference type="RefSeq" id="WP_003618364.1">
    <property type="nucleotide sequence ID" value="NZ_JQAV01000018.1"/>
</dbReference>
<dbReference type="SMR" id="Q1G9A0"/>
<dbReference type="STRING" id="390333.Ldb1522"/>
<dbReference type="KEGG" id="ldb:Ldb1522"/>
<dbReference type="PATRIC" id="fig|390333.13.peg.878"/>
<dbReference type="eggNOG" id="COG0773">
    <property type="taxonomic scope" value="Bacteria"/>
</dbReference>
<dbReference type="HOGENOM" id="CLU_028104_1_0_9"/>
<dbReference type="BioCyc" id="LDEL390333:LDB_RS06565-MONOMER"/>
<dbReference type="UniPathway" id="UPA00219"/>
<dbReference type="Proteomes" id="UP000001259">
    <property type="component" value="Chromosome"/>
</dbReference>
<dbReference type="GO" id="GO:0005737">
    <property type="term" value="C:cytoplasm"/>
    <property type="evidence" value="ECO:0007669"/>
    <property type="project" value="UniProtKB-SubCell"/>
</dbReference>
<dbReference type="GO" id="GO:0005524">
    <property type="term" value="F:ATP binding"/>
    <property type="evidence" value="ECO:0007669"/>
    <property type="project" value="UniProtKB-UniRule"/>
</dbReference>
<dbReference type="GO" id="GO:0008763">
    <property type="term" value="F:UDP-N-acetylmuramate-L-alanine ligase activity"/>
    <property type="evidence" value="ECO:0007669"/>
    <property type="project" value="UniProtKB-UniRule"/>
</dbReference>
<dbReference type="GO" id="GO:0051301">
    <property type="term" value="P:cell division"/>
    <property type="evidence" value="ECO:0007669"/>
    <property type="project" value="UniProtKB-KW"/>
</dbReference>
<dbReference type="GO" id="GO:0071555">
    <property type="term" value="P:cell wall organization"/>
    <property type="evidence" value="ECO:0007669"/>
    <property type="project" value="UniProtKB-KW"/>
</dbReference>
<dbReference type="GO" id="GO:0009252">
    <property type="term" value="P:peptidoglycan biosynthetic process"/>
    <property type="evidence" value="ECO:0007669"/>
    <property type="project" value="UniProtKB-UniRule"/>
</dbReference>
<dbReference type="GO" id="GO:0008360">
    <property type="term" value="P:regulation of cell shape"/>
    <property type="evidence" value="ECO:0007669"/>
    <property type="project" value="UniProtKB-KW"/>
</dbReference>
<dbReference type="Gene3D" id="3.90.190.20">
    <property type="entry name" value="Mur ligase, C-terminal domain"/>
    <property type="match status" value="1"/>
</dbReference>
<dbReference type="Gene3D" id="3.40.1190.10">
    <property type="entry name" value="Mur-like, catalytic domain"/>
    <property type="match status" value="1"/>
</dbReference>
<dbReference type="Gene3D" id="3.40.50.720">
    <property type="entry name" value="NAD(P)-binding Rossmann-like Domain"/>
    <property type="match status" value="1"/>
</dbReference>
<dbReference type="HAMAP" id="MF_00046">
    <property type="entry name" value="MurC"/>
    <property type="match status" value="1"/>
</dbReference>
<dbReference type="InterPro" id="IPR036565">
    <property type="entry name" value="Mur-like_cat_sf"/>
</dbReference>
<dbReference type="InterPro" id="IPR004101">
    <property type="entry name" value="Mur_ligase_C"/>
</dbReference>
<dbReference type="InterPro" id="IPR036615">
    <property type="entry name" value="Mur_ligase_C_dom_sf"/>
</dbReference>
<dbReference type="InterPro" id="IPR013221">
    <property type="entry name" value="Mur_ligase_cen"/>
</dbReference>
<dbReference type="InterPro" id="IPR000713">
    <property type="entry name" value="Mur_ligase_N"/>
</dbReference>
<dbReference type="InterPro" id="IPR050061">
    <property type="entry name" value="MurCDEF_pg_biosynth"/>
</dbReference>
<dbReference type="InterPro" id="IPR005758">
    <property type="entry name" value="UDP-N-AcMur_Ala_ligase_MurC"/>
</dbReference>
<dbReference type="NCBIfam" id="TIGR01082">
    <property type="entry name" value="murC"/>
    <property type="match status" value="1"/>
</dbReference>
<dbReference type="PANTHER" id="PTHR43445:SF3">
    <property type="entry name" value="UDP-N-ACETYLMURAMATE--L-ALANINE LIGASE"/>
    <property type="match status" value="1"/>
</dbReference>
<dbReference type="PANTHER" id="PTHR43445">
    <property type="entry name" value="UDP-N-ACETYLMURAMATE--L-ALANINE LIGASE-RELATED"/>
    <property type="match status" value="1"/>
</dbReference>
<dbReference type="Pfam" id="PF01225">
    <property type="entry name" value="Mur_ligase"/>
    <property type="match status" value="1"/>
</dbReference>
<dbReference type="Pfam" id="PF02875">
    <property type="entry name" value="Mur_ligase_C"/>
    <property type="match status" value="1"/>
</dbReference>
<dbReference type="Pfam" id="PF08245">
    <property type="entry name" value="Mur_ligase_M"/>
    <property type="match status" value="1"/>
</dbReference>
<dbReference type="SUPFAM" id="SSF51984">
    <property type="entry name" value="MurCD N-terminal domain"/>
    <property type="match status" value="1"/>
</dbReference>
<dbReference type="SUPFAM" id="SSF53623">
    <property type="entry name" value="MurD-like peptide ligases, catalytic domain"/>
    <property type="match status" value="1"/>
</dbReference>
<dbReference type="SUPFAM" id="SSF53244">
    <property type="entry name" value="MurD-like peptide ligases, peptide-binding domain"/>
    <property type="match status" value="1"/>
</dbReference>
<sequence length="439" mass="48866">MLDKTKQIWFIGIKGTGMASLALILHDLGYKVAGSDIDKYTFTQDPLEAAGIEVASFSKDNIKESGQVIVKGNAFKSDNIEVAACEEKGVKWQSYPDTVEEIVQQYTSIGVAGSHGKTSTTGLLATVLGEAAPTSFLIGDGMGKGVKDSRFFVYEADEYRRHFLAYHPDYQIMTNVDFDHPDYFKDRDDYASAFQTAADQTKKGLFVWGDDERLQKIHPKTAKKYTYGLKDSDDFQAFDVVKTTEGAKFHVRANGEDLGEFTIHLFGDHNVMNATAVIAIAFTEGIDLDVVRKGLVKYTGAKRRFSEKDFGDTVVIDDYAHHPTELRATIQAARQKFPDRKLVTIFQPHTYSRTKEFEEEYVEILKGVDKAFLTPIYGSAREAAGDIKSEDIASQIPGAEVIDFDNLKDLLAYKGDCIVFMGAGDIPKYEVAFEEMLGK</sequence>